<comment type="function">
    <text evidence="1">Required for nucleoid occlusion (NO) phenomenon, which prevents Z-ring formation and cell division over the nucleoid. Acts as a DNA-associated cell division inhibitor that binds simultaneously chromosomal DNA and FtsZ, and disrupts the assembly of FtsZ polymers. SlmA-DNA-binding sequences (SBS) are dispersed on non-Ter regions of the chromosome, preventing FtsZ polymerization at these regions.</text>
</comment>
<comment type="subunit">
    <text evidence="1">Homodimer. Interacts with FtsZ.</text>
</comment>
<comment type="subcellular location">
    <subcellularLocation>
        <location evidence="1">Cytoplasm</location>
        <location evidence="1">Nucleoid</location>
    </subcellularLocation>
</comment>
<comment type="similarity">
    <text evidence="1">Belongs to the nucleoid occlusion factor SlmA family.</text>
</comment>
<proteinExistence type="inferred from homology"/>
<protein>
    <recommendedName>
        <fullName evidence="1">Nucleoid occlusion factor SlmA</fullName>
    </recommendedName>
</protein>
<sequence>MAEKQTAKRNRREEILQSLALMLESSDGSQRITTAKLAASVGVSEAALYRHFPSKTRMFDSLIEFIEDSLITRINLILKDEKNTSTRLRLIVLLILGFGERNPGLTRILTGHALMFEQDRLQGRINQLFERIEAQLRQVLREKRMREGEGYTTDENLLASQLLAFCEGMLSRFVRSEFKYRPTDDFDARWPLIAAQLQ</sequence>
<keyword id="KW-0131">Cell cycle</keyword>
<keyword id="KW-0132">Cell division</keyword>
<keyword id="KW-0175">Coiled coil</keyword>
<keyword id="KW-0963">Cytoplasm</keyword>
<keyword id="KW-0238">DNA-binding</keyword>
<dbReference type="EMBL" id="CP000857">
    <property type="protein sequence ID" value="ACN47889.1"/>
    <property type="molecule type" value="Genomic_DNA"/>
</dbReference>
<dbReference type="RefSeq" id="WP_000818607.1">
    <property type="nucleotide sequence ID" value="NC_012125.1"/>
</dbReference>
<dbReference type="SMR" id="C0Q1X3"/>
<dbReference type="KEGG" id="sei:SPC_3814"/>
<dbReference type="HOGENOM" id="CLU_069356_5_0_6"/>
<dbReference type="Proteomes" id="UP000001599">
    <property type="component" value="Chromosome"/>
</dbReference>
<dbReference type="GO" id="GO:0043590">
    <property type="term" value="C:bacterial nucleoid"/>
    <property type="evidence" value="ECO:0007669"/>
    <property type="project" value="UniProtKB-UniRule"/>
</dbReference>
<dbReference type="GO" id="GO:0005737">
    <property type="term" value="C:cytoplasm"/>
    <property type="evidence" value="ECO:0007669"/>
    <property type="project" value="UniProtKB-UniRule"/>
</dbReference>
<dbReference type="GO" id="GO:0003700">
    <property type="term" value="F:DNA-binding transcription factor activity"/>
    <property type="evidence" value="ECO:0007669"/>
    <property type="project" value="TreeGrafter"/>
</dbReference>
<dbReference type="GO" id="GO:0000976">
    <property type="term" value="F:transcription cis-regulatory region binding"/>
    <property type="evidence" value="ECO:0007669"/>
    <property type="project" value="TreeGrafter"/>
</dbReference>
<dbReference type="GO" id="GO:0051301">
    <property type="term" value="P:cell division"/>
    <property type="evidence" value="ECO:0007669"/>
    <property type="project" value="UniProtKB-KW"/>
</dbReference>
<dbReference type="GO" id="GO:0010974">
    <property type="term" value="P:negative regulation of division septum assembly"/>
    <property type="evidence" value="ECO:0007669"/>
    <property type="project" value="InterPro"/>
</dbReference>
<dbReference type="FunFam" id="1.10.357.10:FF:000002">
    <property type="entry name" value="Nucleoid occlusion factor SlmA"/>
    <property type="match status" value="1"/>
</dbReference>
<dbReference type="Gene3D" id="1.10.357.10">
    <property type="entry name" value="Tetracycline Repressor, domain 2"/>
    <property type="match status" value="1"/>
</dbReference>
<dbReference type="HAMAP" id="MF_01839">
    <property type="entry name" value="NO_factor_SlmA"/>
    <property type="match status" value="1"/>
</dbReference>
<dbReference type="InterPro" id="IPR023772">
    <property type="entry name" value="DNA-bd_HTH_TetR-type_CS"/>
</dbReference>
<dbReference type="InterPro" id="IPR009057">
    <property type="entry name" value="Homeodomain-like_sf"/>
</dbReference>
<dbReference type="InterPro" id="IPR050109">
    <property type="entry name" value="HTH-type_TetR-like_transc_reg"/>
</dbReference>
<dbReference type="InterPro" id="IPR001647">
    <property type="entry name" value="HTH_TetR"/>
</dbReference>
<dbReference type="InterPro" id="IPR023769">
    <property type="entry name" value="NO_SlmA"/>
</dbReference>
<dbReference type="InterPro" id="IPR054580">
    <property type="entry name" value="SlmA-like_C"/>
</dbReference>
<dbReference type="InterPro" id="IPR036271">
    <property type="entry name" value="Tet_transcr_reg_TetR-rel_C_sf"/>
</dbReference>
<dbReference type="NCBIfam" id="NF007015">
    <property type="entry name" value="PRK09480.1"/>
    <property type="match status" value="1"/>
</dbReference>
<dbReference type="PANTHER" id="PTHR30055">
    <property type="entry name" value="HTH-TYPE TRANSCRIPTIONAL REGULATOR RUTR"/>
    <property type="match status" value="1"/>
</dbReference>
<dbReference type="PANTHER" id="PTHR30055:SF183">
    <property type="entry name" value="NUCLEOID OCCLUSION FACTOR SLMA"/>
    <property type="match status" value="1"/>
</dbReference>
<dbReference type="Pfam" id="PF22276">
    <property type="entry name" value="SlmA-like_C"/>
    <property type="match status" value="1"/>
</dbReference>
<dbReference type="Pfam" id="PF00440">
    <property type="entry name" value="TetR_N"/>
    <property type="match status" value="1"/>
</dbReference>
<dbReference type="SUPFAM" id="SSF46689">
    <property type="entry name" value="Homeodomain-like"/>
    <property type="match status" value="1"/>
</dbReference>
<dbReference type="SUPFAM" id="SSF48498">
    <property type="entry name" value="Tetracyclin repressor-like, C-terminal domain"/>
    <property type="match status" value="1"/>
</dbReference>
<dbReference type="PROSITE" id="PS01081">
    <property type="entry name" value="HTH_TETR_1"/>
    <property type="match status" value="1"/>
</dbReference>
<dbReference type="PROSITE" id="PS50977">
    <property type="entry name" value="HTH_TETR_2"/>
    <property type="match status" value="1"/>
</dbReference>
<reference key="1">
    <citation type="journal article" date="2009" name="PLoS ONE">
        <title>Salmonella paratyphi C: genetic divergence from Salmonella choleraesuis and pathogenic convergence with Salmonella typhi.</title>
        <authorList>
            <person name="Liu W.-Q."/>
            <person name="Feng Y."/>
            <person name="Wang Y."/>
            <person name="Zou Q.-H."/>
            <person name="Chen F."/>
            <person name="Guo J.-T."/>
            <person name="Peng Y.-H."/>
            <person name="Jin Y."/>
            <person name="Li Y.-G."/>
            <person name="Hu S.-N."/>
            <person name="Johnston R.N."/>
            <person name="Liu G.-R."/>
            <person name="Liu S.-L."/>
        </authorList>
    </citation>
    <scope>NUCLEOTIDE SEQUENCE [LARGE SCALE GENOMIC DNA]</scope>
    <source>
        <strain>RKS4594</strain>
    </source>
</reference>
<feature type="chain" id="PRO_1000188399" description="Nucleoid occlusion factor SlmA">
    <location>
        <begin position="1"/>
        <end position="198"/>
    </location>
</feature>
<feature type="domain" description="HTH tetR-type" evidence="1">
    <location>
        <begin position="10"/>
        <end position="70"/>
    </location>
</feature>
<feature type="DNA-binding region" description="H-T-H motif" evidence="1">
    <location>
        <begin position="33"/>
        <end position="52"/>
    </location>
</feature>
<feature type="coiled-coil region" evidence="1">
    <location>
        <begin position="117"/>
        <end position="144"/>
    </location>
</feature>
<gene>
    <name evidence="1" type="primary">slmA</name>
    <name type="ordered locus">SPC_3814</name>
</gene>
<organism>
    <name type="scientific">Salmonella paratyphi C (strain RKS4594)</name>
    <dbReference type="NCBI Taxonomy" id="476213"/>
    <lineage>
        <taxon>Bacteria</taxon>
        <taxon>Pseudomonadati</taxon>
        <taxon>Pseudomonadota</taxon>
        <taxon>Gammaproteobacteria</taxon>
        <taxon>Enterobacterales</taxon>
        <taxon>Enterobacteriaceae</taxon>
        <taxon>Salmonella</taxon>
    </lineage>
</organism>
<evidence type="ECO:0000255" key="1">
    <source>
        <dbReference type="HAMAP-Rule" id="MF_01839"/>
    </source>
</evidence>
<accession>C0Q1X3</accession>
<name>SLMA_SALPC</name>